<sequence>MTKTYKYEDQLDFIQKSDDVKNLFIIKKGFVPNMNVEGHLFANDNLSKLLFDELKQFTDDPGSFLPALKQLANVAALPGIVKSSIALPDAHSGYGFSIGNVAAFDMDNCNSIVSPGGVGFDINCGVRLLRTNLLYKDIEPIKEQLVQKLFDLIPVGVGCQGKIPCDYGDLDNILEYGMDWSVCSGYSWAEDKEHCEDFGRMIQADPTVVSYRAKKRGLSQIGTLGAGNHYGEVQVVEEIYDEYSAKVMGIDRIGQVCIMTHSGSRGLGHQVASDALVDMENSLNKSKIKVNDKQLACARINSDEGKKYLKGMAAASNYAWVNRSVMTHLTRKAFEEVLKESADDLDMHVVYDVSHNIAKIEDHIVDGKLKRLLLHRKGSTRAFPPYHPLISADFQHIGQPVLVGGTMGTCSYVLTGTQLAMDLTLGSTCHGSGRTLSRNKSRRILDYNEVLNNLKEKGISIRVASPKLVTEEAPESYKDVSEVVQTCHDSGISKKCVKLRPVAVIKG</sequence>
<gene>
    <name type="ordered locus">TP04_0661</name>
</gene>
<comment type="function">
    <text evidence="1">Catalytic subunit of the tRNA-splicing ligase complex that acts by directly joining spliced tRNA halves to mature-sized tRNAs by incorporating the precursor-derived splice junction phosphate into the mature tRNA as a canonical 3',5'-phosphodiester. May act as an RNA ligase with broad substrate specificity, and may function toward other RNAs.</text>
</comment>
<comment type="catalytic activity">
    <reaction evidence="1">
        <text>a 3'-end 3'-phospho-ribonucleotide-RNA + a 5'-end dephospho-ribonucleoside-RNA + GTP = a ribonucleotidyl-ribonucleotide-RNA + GMP + diphosphate</text>
        <dbReference type="Rhea" id="RHEA:68076"/>
        <dbReference type="Rhea" id="RHEA-COMP:10463"/>
        <dbReference type="Rhea" id="RHEA-COMP:13936"/>
        <dbReference type="Rhea" id="RHEA-COMP:17355"/>
        <dbReference type="ChEBI" id="CHEBI:33019"/>
        <dbReference type="ChEBI" id="CHEBI:37565"/>
        <dbReference type="ChEBI" id="CHEBI:58115"/>
        <dbReference type="ChEBI" id="CHEBI:83062"/>
        <dbReference type="ChEBI" id="CHEBI:138284"/>
        <dbReference type="ChEBI" id="CHEBI:173118"/>
        <dbReference type="EC" id="6.5.1.8"/>
    </reaction>
</comment>
<comment type="catalytic activity">
    <reaction evidence="1">
        <text>a 3'-end 2',3'-cyclophospho-ribonucleotide-RNA + a 5'-end dephospho-ribonucleoside-RNA + GTP + H2O = a ribonucleotidyl-ribonucleotide-RNA + GMP + diphosphate + H(+)</text>
        <dbReference type="Rhea" id="RHEA:68080"/>
        <dbReference type="Rhea" id="RHEA-COMP:10464"/>
        <dbReference type="Rhea" id="RHEA-COMP:13936"/>
        <dbReference type="Rhea" id="RHEA-COMP:17355"/>
        <dbReference type="ChEBI" id="CHEBI:15377"/>
        <dbReference type="ChEBI" id="CHEBI:15378"/>
        <dbReference type="ChEBI" id="CHEBI:33019"/>
        <dbReference type="ChEBI" id="CHEBI:37565"/>
        <dbReference type="ChEBI" id="CHEBI:58115"/>
        <dbReference type="ChEBI" id="CHEBI:83064"/>
        <dbReference type="ChEBI" id="CHEBI:138284"/>
        <dbReference type="ChEBI" id="CHEBI:173118"/>
        <dbReference type="EC" id="6.5.1.8"/>
    </reaction>
</comment>
<comment type="cofactor">
    <cofactor evidence="1">
        <name>Mn(2+)</name>
        <dbReference type="ChEBI" id="CHEBI:29035"/>
    </cofactor>
    <text evidence="1">Binds 2 manganese ions per subunit.</text>
</comment>
<comment type="subunit">
    <text evidence="1">Catalytic component of the tRNA-splicing ligase complex.</text>
</comment>
<comment type="miscellaneous">
    <text evidence="1">Ligation probably proceeds through 3 nucleotidyl transfer steps, with 2',3'-cyclic phosphate termini being hydrolyzed to 3'-P termini in a step that precedes 3'-P activation with GMP. In the first nucleotidyl transfer step, RTCB reacts with GTP to form a covalent RTCB-histidine-GMP intermediate with release of PPi; in the second step, the GMP moiety is transferred to the RNA 3'-P; in the third step, the 5'-OH from the opposite RNA strand attacks the activated 3'-P to form a 3',5'-phosphodiester bond and release GMP.</text>
</comment>
<comment type="similarity">
    <text evidence="1">Belongs to the RtcB family.</text>
</comment>
<keyword id="KW-0342">GTP-binding</keyword>
<keyword id="KW-0436">Ligase</keyword>
<keyword id="KW-0464">Manganese</keyword>
<keyword id="KW-0479">Metal-binding</keyword>
<keyword id="KW-0547">Nucleotide-binding</keyword>
<keyword id="KW-1185">Reference proteome</keyword>
<keyword id="KW-0819">tRNA processing</keyword>
<proteinExistence type="inferred from homology"/>
<name>RTCB_THEPA</name>
<accession>Q4N1R8</accession>
<organism>
    <name type="scientific">Theileria parva</name>
    <name type="common">East coast fever infection agent</name>
    <dbReference type="NCBI Taxonomy" id="5875"/>
    <lineage>
        <taxon>Eukaryota</taxon>
        <taxon>Sar</taxon>
        <taxon>Alveolata</taxon>
        <taxon>Apicomplexa</taxon>
        <taxon>Aconoidasida</taxon>
        <taxon>Piroplasmida</taxon>
        <taxon>Theileriidae</taxon>
        <taxon>Theileria</taxon>
    </lineage>
</organism>
<evidence type="ECO:0000255" key="1">
    <source>
        <dbReference type="HAMAP-Rule" id="MF_03144"/>
    </source>
</evidence>
<protein>
    <recommendedName>
        <fullName evidence="1">RNA-splicing ligase RtcB homolog</fullName>
        <ecNumber evidence="1">6.5.1.8</ecNumber>
    </recommendedName>
    <alternativeName>
        <fullName evidence="1">3'-phosphate/5'-hydroxy nucleic acid ligase</fullName>
    </alternativeName>
</protein>
<dbReference type="EC" id="6.5.1.8" evidence="1"/>
<dbReference type="EMBL" id="AAGK01000004">
    <property type="protein sequence ID" value="EAN32014.1"/>
    <property type="molecule type" value="Genomic_DNA"/>
</dbReference>
<dbReference type="SMR" id="Q4N1R8"/>
<dbReference type="FunCoup" id="Q4N1R8">
    <property type="interactions" value="200"/>
</dbReference>
<dbReference type="STRING" id="5875.Q4N1R8"/>
<dbReference type="EnsemblProtists" id="EAN32014">
    <property type="protein sequence ID" value="EAN32014"/>
    <property type="gene ID" value="TP04_0661"/>
</dbReference>
<dbReference type="GeneID" id="3501151"/>
<dbReference type="KEGG" id="tpv:TP04_0661"/>
<dbReference type="VEuPathDB" id="PiroplasmaDB:TpMuguga_04g00661"/>
<dbReference type="eggNOG" id="KOG3833">
    <property type="taxonomic scope" value="Eukaryota"/>
</dbReference>
<dbReference type="InParanoid" id="Q4N1R8"/>
<dbReference type="OMA" id="QTRGVEC"/>
<dbReference type="Proteomes" id="UP000001949">
    <property type="component" value="Unassembled WGS sequence"/>
</dbReference>
<dbReference type="GO" id="GO:0005634">
    <property type="term" value="C:nucleus"/>
    <property type="evidence" value="ECO:0007669"/>
    <property type="project" value="TreeGrafter"/>
</dbReference>
<dbReference type="GO" id="GO:0072669">
    <property type="term" value="C:tRNA-splicing ligase complex"/>
    <property type="evidence" value="ECO:0007669"/>
    <property type="project" value="UniProtKB-UniRule"/>
</dbReference>
<dbReference type="GO" id="GO:0005525">
    <property type="term" value="F:GTP binding"/>
    <property type="evidence" value="ECO:0007669"/>
    <property type="project" value="UniProtKB-KW"/>
</dbReference>
<dbReference type="GO" id="GO:0046872">
    <property type="term" value="F:metal ion binding"/>
    <property type="evidence" value="ECO:0007669"/>
    <property type="project" value="UniProtKB-KW"/>
</dbReference>
<dbReference type="GO" id="GO:0003972">
    <property type="term" value="F:RNA ligase (ATP) activity"/>
    <property type="evidence" value="ECO:0007669"/>
    <property type="project" value="TreeGrafter"/>
</dbReference>
<dbReference type="GO" id="GO:0170057">
    <property type="term" value="F:RNA ligase (GTP) activity"/>
    <property type="evidence" value="ECO:0007669"/>
    <property type="project" value="UniProtKB-EC"/>
</dbReference>
<dbReference type="GO" id="GO:0006388">
    <property type="term" value="P:tRNA splicing, via endonucleolytic cleavage and ligation"/>
    <property type="evidence" value="ECO:0007669"/>
    <property type="project" value="UniProtKB-UniRule"/>
</dbReference>
<dbReference type="FunFam" id="3.90.1860.10:FF:000001">
    <property type="entry name" value="tRNA-splicing ligase RtcB homolog"/>
    <property type="match status" value="1"/>
</dbReference>
<dbReference type="Gene3D" id="3.90.1860.10">
    <property type="entry name" value="tRNA-splicing ligase RtcB"/>
    <property type="match status" value="1"/>
</dbReference>
<dbReference type="HAMAP" id="MF_03144">
    <property type="entry name" value="RtcB_euk"/>
    <property type="match status" value="1"/>
</dbReference>
<dbReference type="InterPro" id="IPR001233">
    <property type="entry name" value="RtcB"/>
</dbReference>
<dbReference type="InterPro" id="IPR036025">
    <property type="entry name" value="RtcB-like_sf"/>
</dbReference>
<dbReference type="InterPro" id="IPR027513">
    <property type="entry name" value="RtcB_euk"/>
</dbReference>
<dbReference type="PANTHER" id="PTHR11118">
    <property type="entry name" value="RNA-SPLICING LIGASE RTCB HOMOLOG"/>
    <property type="match status" value="1"/>
</dbReference>
<dbReference type="PANTHER" id="PTHR11118:SF1">
    <property type="entry name" value="RNA-SPLICING LIGASE RTCB HOMOLOG"/>
    <property type="match status" value="1"/>
</dbReference>
<dbReference type="Pfam" id="PF01139">
    <property type="entry name" value="RtcB"/>
    <property type="match status" value="1"/>
</dbReference>
<dbReference type="SUPFAM" id="SSF103365">
    <property type="entry name" value="Hypothetical protein PH1602"/>
    <property type="match status" value="1"/>
</dbReference>
<dbReference type="PROSITE" id="PS01288">
    <property type="entry name" value="UPF0027"/>
    <property type="match status" value="1"/>
</dbReference>
<reference key="1">
    <citation type="journal article" date="2005" name="Science">
        <title>Genome sequence of Theileria parva, a bovine pathogen that transforms lymphocytes.</title>
        <authorList>
            <person name="Gardner M.J."/>
            <person name="Bishop R."/>
            <person name="Shah T."/>
            <person name="de Villiers E.P."/>
            <person name="Carlton J.M."/>
            <person name="Hall N."/>
            <person name="Ren Q."/>
            <person name="Paulsen I.T."/>
            <person name="Pain A."/>
            <person name="Berriman M."/>
            <person name="Wilson R.J.M."/>
            <person name="Sato S."/>
            <person name="Ralph S.A."/>
            <person name="Mann D.J."/>
            <person name="Xiong Z."/>
            <person name="Shallom S.J."/>
            <person name="Weidman J."/>
            <person name="Jiang L."/>
            <person name="Lynn J."/>
            <person name="Weaver B."/>
            <person name="Shoaibi A."/>
            <person name="Domingo A.R."/>
            <person name="Wasawo D."/>
            <person name="Crabtree J."/>
            <person name="Wortman J.R."/>
            <person name="Haas B."/>
            <person name="Angiuoli S.V."/>
            <person name="Creasy T.H."/>
            <person name="Lu C."/>
            <person name="Suh B."/>
            <person name="Silva J.C."/>
            <person name="Utterback T.R."/>
            <person name="Feldblyum T.V."/>
            <person name="Pertea M."/>
            <person name="Allen J."/>
            <person name="Nierman W.C."/>
            <person name="Taracha E.L.N."/>
            <person name="Salzberg S.L."/>
            <person name="White O.R."/>
            <person name="Fitzhugh H.A."/>
            <person name="Morzaria S."/>
            <person name="Venter J.C."/>
            <person name="Fraser C.M."/>
            <person name="Nene V."/>
        </authorList>
    </citation>
    <scope>NUCLEOTIDE SEQUENCE [LARGE SCALE GENOMIC DNA]</scope>
    <source>
        <strain>Muguga</strain>
    </source>
</reference>
<feature type="chain" id="PRO_0000407243" description="RNA-splicing ligase RtcB homolog">
    <location>
        <begin position="1"/>
        <end position="507"/>
    </location>
</feature>
<feature type="active site" description="GMP-histidine intermediate" evidence="1">
    <location>
        <position position="430"/>
    </location>
</feature>
<feature type="binding site" evidence="1">
    <location>
        <position position="121"/>
    </location>
    <ligand>
        <name>Mn(2+)</name>
        <dbReference type="ChEBI" id="CHEBI:29035"/>
        <label>1</label>
    </ligand>
</feature>
<feature type="binding site" evidence="1">
    <location>
        <position position="124"/>
    </location>
    <ligand>
        <name>Mn(2+)</name>
        <dbReference type="ChEBI" id="CHEBI:29035"/>
        <label>1</label>
    </ligand>
</feature>
<feature type="binding site" evidence="1">
    <location>
        <position position="124"/>
    </location>
    <ligand>
        <name>Mn(2+)</name>
        <dbReference type="ChEBI" id="CHEBI:29035"/>
        <label>2</label>
    </ligand>
</feature>
<feature type="binding site" evidence="1">
    <location>
        <begin position="228"/>
        <end position="232"/>
    </location>
    <ligand>
        <name>GMP</name>
        <dbReference type="ChEBI" id="CHEBI:58115"/>
    </ligand>
</feature>
<feature type="binding site" evidence="1">
    <location>
        <position position="229"/>
    </location>
    <ligand>
        <name>Mn(2+)</name>
        <dbReference type="ChEBI" id="CHEBI:29035"/>
        <label>1</label>
    </ligand>
</feature>
<feature type="binding site" evidence="1">
    <location>
        <position position="261"/>
    </location>
    <ligand>
        <name>Mn(2+)</name>
        <dbReference type="ChEBI" id="CHEBI:29035"/>
        <label>2</label>
    </ligand>
</feature>
<feature type="binding site" evidence="1">
    <location>
        <begin position="355"/>
        <end position="356"/>
    </location>
    <ligand>
        <name>GMP</name>
        <dbReference type="ChEBI" id="CHEBI:58115"/>
    </ligand>
</feature>
<feature type="binding site" evidence="1">
    <location>
        <position position="355"/>
    </location>
    <ligand>
        <name>Mn(2+)</name>
        <dbReference type="ChEBI" id="CHEBI:29035"/>
        <label>2</label>
    </ligand>
</feature>
<feature type="binding site" evidence="1">
    <location>
        <begin position="404"/>
        <end position="407"/>
    </location>
    <ligand>
        <name>GMP</name>
        <dbReference type="ChEBI" id="CHEBI:58115"/>
    </ligand>
</feature>
<feature type="binding site" evidence="1">
    <location>
        <position position="411"/>
    </location>
    <ligand>
        <name>GMP</name>
        <dbReference type="ChEBI" id="CHEBI:58115"/>
    </ligand>
</feature>
<feature type="binding site" evidence="1">
    <location>
        <begin position="430"/>
        <end position="433"/>
    </location>
    <ligand>
        <name>GMP</name>
        <dbReference type="ChEBI" id="CHEBI:58115"/>
    </ligand>
</feature>
<feature type="binding site" evidence="1">
    <location>
        <position position="506"/>
    </location>
    <ligand>
        <name>GMP</name>
        <dbReference type="ChEBI" id="CHEBI:58115"/>
    </ligand>
</feature>